<protein>
    <recommendedName>
        <fullName evidence="2">Protein monoglycylase TTLL8</fullName>
        <ecNumber evidence="2">6.3.2.-</ecNumber>
    </recommendedName>
    <alternativeName>
        <fullName evidence="2">Tubulin--tyrosine ligase-like protein 8</fullName>
    </alternativeName>
</protein>
<accession>A6PVC2</accession>
<accession>B5MDV0</accession>
<name>TTLL8_HUMAN</name>
<keyword id="KW-0025">Alternative splicing</keyword>
<keyword id="KW-0067">ATP-binding</keyword>
<keyword id="KW-0966">Cell projection</keyword>
<keyword id="KW-0969">Cilium</keyword>
<keyword id="KW-0963">Cytoplasm</keyword>
<keyword id="KW-0206">Cytoskeleton</keyword>
<keyword id="KW-0282">Flagellum</keyword>
<keyword id="KW-0436">Ligase</keyword>
<keyword id="KW-0460">Magnesium</keyword>
<keyword id="KW-0479">Metal-binding</keyword>
<keyword id="KW-0493">Microtubule</keyword>
<keyword id="KW-0547">Nucleotide-binding</keyword>
<keyword id="KW-1185">Reference proteome</keyword>
<feature type="chain" id="PRO_0000340645" description="Protein monoglycylase TTLL8">
    <location>
        <begin position="1"/>
        <end position="850"/>
    </location>
</feature>
<feature type="domain" description="TTL" evidence="4">
    <location>
        <begin position="222"/>
        <end position="580"/>
    </location>
</feature>
<feature type="region of interest" description="Disordered" evidence="5">
    <location>
        <begin position="1"/>
        <end position="29"/>
    </location>
</feature>
<feature type="region of interest" description="Disordered" evidence="5">
    <location>
        <begin position="228"/>
        <end position="254"/>
    </location>
</feature>
<feature type="region of interest" description="Disordered" evidence="5">
    <location>
        <begin position="627"/>
        <end position="652"/>
    </location>
</feature>
<feature type="binding site" evidence="1">
    <location>
        <position position="354"/>
    </location>
    <ligand>
        <name>ATP</name>
        <dbReference type="ChEBI" id="CHEBI:30616"/>
    </ligand>
</feature>
<feature type="binding site" evidence="1">
    <location>
        <begin position="360"/>
        <end position="361"/>
    </location>
    <ligand>
        <name>ATP</name>
        <dbReference type="ChEBI" id="CHEBI:30616"/>
    </ligand>
</feature>
<feature type="binding site" evidence="1">
    <location>
        <position position="360"/>
    </location>
    <ligand>
        <name>a protein</name>
        <dbReference type="ChEBI" id="CHEBI:16541"/>
    </ligand>
    <ligandPart>
        <name>L-glutamate residue</name>
        <dbReference type="ChEBI" id="CHEBI:29973"/>
        <note>L-glutamate acceptor residue in protein target</note>
    </ligandPart>
</feature>
<feature type="binding site" evidence="3">
    <location>
        <begin position="392"/>
        <end position="395"/>
    </location>
    <ligand>
        <name>ATP</name>
        <dbReference type="ChEBI" id="CHEBI:30616"/>
    </ligand>
</feature>
<feature type="binding site" evidence="1">
    <location>
        <begin position="405"/>
        <end position="407"/>
    </location>
    <ligand>
        <name>ATP</name>
        <dbReference type="ChEBI" id="CHEBI:30616"/>
    </ligand>
</feature>
<feature type="binding site" evidence="1">
    <location>
        <begin position="449"/>
        <end position="450"/>
    </location>
    <ligand>
        <name>ATP</name>
        <dbReference type="ChEBI" id="CHEBI:30616"/>
    </ligand>
</feature>
<feature type="binding site" evidence="1">
    <location>
        <position position="527"/>
    </location>
    <ligand>
        <name>Mg(2+)</name>
        <dbReference type="ChEBI" id="CHEBI:18420"/>
        <label>1</label>
    </ligand>
</feature>
<feature type="binding site" evidence="3">
    <location>
        <position position="540"/>
    </location>
    <ligand>
        <name>ATP</name>
        <dbReference type="ChEBI" id="CHEBI:30616"/>
    </ligand>
</feature>
<feature type="binding site" evidence="1">
    <location>
        <position position="540"/>
    </location>
    <ligand>
        <name>Mg(2+)</name>
        <dbReference type="ChEBI" id="CHEBI:18420"/>
        <label>1</label>
    </ligand>
</feature>
<feature type="binding site" evidence="1">
    <location>
        <position position="540"/>
    </location>
    <ligand>
        <name>Mg(2+)</name>
        <dbReference type="ChEBI" id="CHEBI:18420"/>
        <label>2</label>
    </ligand>
</feature>
<feature type="binding site" evidence="1">
    <location>
        <position position="542"/>
    </location>
    <ligand>
        <name>Mg(2+)</name>
        <dbReference type="ChEBI" id="CHEBI:18420"/>
        <label>2</label>
    </ligand>
</feature>
<feature type="site" description="Essential for specifying initiation versus elongation step of the glycylase activity" evidence="1">
    <location>
        <position position="360"/>
    </location>
</feature>
<feature type="splice variant" id="VSP_054007" description="In isoform 2." evidence="6">
    <original>MEPERKGLSLASSSDGDGREENKLKQGISQDLASSSRLDRYKIARQLTEKAIK</original>
    <variation>MRLLDGKQTSRYSENAC</variation>
    <location>
        <begin position="1"/>
        <end position="53"/>
    </location>
</feature>
<feature type="splice variant" id="VSP_054008" description="In isoform 2." evidence="6">
    <original>HGDAFISNSRNYFS</original>
    <variation>QVPLGSSIVLCIFKIQKVMMSFEPPTARDR</variation>
    <location>
        <begin position="313"/>
        <end position="326"/>
    </location>
</feature>
<feature type="splice variant" id="VSP_054009" description="In isoform 2." evidence="6">
    <original>R</original>
    <variation>RGESP</variation>
    <location>
        <position position="362"/>
    </location>
</feature>
<feature type="sequence variant" id="VAR_061867" description="In dbSNP:rs59727397.">
    <original>L</original>
    <variation>W</variation>
    <location>
        <position position="127"/>
    </location>
</feature>
<feature type="sequence variant" id="VAR_057316" description="In dbSNP:rs17013076.">
    <original>R</original>
    <variation>H</variation>
    <location>
        <position position="191"/>
    </location>
</feature>
<feature type="sequence variant" id="VAR_057317" description="In dbSNP:rs9628315.">
    <original>E</original>
    <variation>K</variation>
    <location>
        <position position="294"/>
    </location>
</feature>
<proteinExistence type="evidence at transcript level"/>
<organism>
    <name type="scientific">Homo sapiens</name>
    <name type="common">Human</name>
    <dbReference type="NCBI Taxonomy" id="9606"/>
    <lineage>
        <taxon>Eukaryota</taxon>
        <taxon>Metazoa</taxon>
        <taxon>Chordata</taxon>
        <taxon>Craniata</taxon>
        <taxon>Vertebrata</taxon>
        <taxon>Euteleostomi</taxon>
        <taxon>Mammalia</taxon>
        <taxon>Eutheria</taxon>
        <taxon>Euarchontoglires</taxon>
        <taxon>Primates</taxon>
        <taxon>Haplorrhini</taxon>
        <taxon>Catarrhini</taxon>
        <taxon>Hominidae</taxon>
        <taxon>Homo</taxon>
    </lineage>
</organism>
<gene>
    <name evidence="7" type="primary">TTLL8</name>
</gene>
<dbReference type="EC" id="6.3.2.-" evidence="2"/>
<dbReference type="EMBL" id="AL022327">
    <property type="status" value="NOT_ANNOTATED_CDS"/>
    <property type="molecule type" value="Genomic_DNA"/>
</dbReference>
<dbReference type="EMBL" id="CR745100">
    <property type="status" value="NOT_ANNOTATED_CDS"/>
    <property type="molecule type" value="mRNA"/>
</dbReference>
<dbReference type="SMR" id="A6PVC2"/>
<dbReference type="FunCoup" id="A6PVC2">
    <property type="interactions" value="13"/>
</dbReference>
<dbReference type="STRING" id="9606.ENSP00000392252"/>
<dbReference type="GlyGen" id="A6PVC2">
    <property type="glycosylation" value="1 site, 1 O-linked glycan (1 site)"/>
</dbReference>
<dbReference type="iPTMnet" id="A6PVC2"/>
<dbReference type="PhosphoSitePlus" id="A6PVC2"/>
<dbReference type="BioMuta" id="TTLL8"/>
<dbReference type="MassIVE" id="A6PVC2"/>
<dbReference type="PaxDb" id="9606-ENSP00000392252"/>
<dbReference type="Antibodypedia" id="28278">
    <property type="antibodies" value="39 antibodies from 10 providers"/>
</dbReference>
<dbReference type="UCSC" id="uc062fiv.1">
    <molecule id="A6PVC2-1"/>
    <property type="organism name" value="human"/>
</dbReference>
<dbReference type="AGR" id="HGNC:34000"/>
<dbReference type="GeneCards" id="TTLL8"/>
<dbReference type="HGNC" id="HGNC:34000">
    <property type="gene designation" value="TTLL8"/>
</dbReference>
<dbReference type="MIM" id="619193">
    <property type="type" value="gene"/>
</dbReference>
<dbReference type="neXtProt" id="NX_A6PVC2"/>
<dbReference type="PharmGKB" id="PA162407295"/>
<dbReference type="VEuPathDB" id="HostDB:ENSG00000138892"/>
<dbReference type="eggNOG" id="KOG2157">
    <property type="taxonomic scope" value="Eukaryota"/>
</dbReference>
<dbReference type="InParanoid" id="A6PVC2"/>
<dbReference type="OMA" id="DDIHNVM"/>
<dbReference type="OrthoDB" id="202825at2759"/>
<dbReference type="PAN-GO" id="A6PVC2">
    <property type="GO annotations" value="6 GO annotations based on evolutionary models"/>
</dbReference>
<dbReference type="PhylomeDB" id="A6PVC2"/>
<dbReference type="TreeFam" id="TF313087"/>
<dbReference type="PathwayCommons" id="A6PVC2"/>
<dbReference type="Reactome" id="R-HSA-8955332">
    <property type="pathway name" value="Carboxyterminal post-translational modifications of tubulin"/>
</dbReference>
<dbReference type="Pharos" id="A6PVC2">
    <property type="development level" value="Tdark"/>
</dbReference>
<dbReference type="PRO" id="PR:A6PVC2"/>
<dbReference type="Proteomes" id="UP000005640">
    <property type="component" value="Chromosome 22"/>
</dbReference>
<dbReference type="RNAct" id="A6PVC2">
    <property type="molecule type" value="protein"/>
</dbReference>
<dbReference type="Bgee" id="ENSG00000138892">
    <property type="expression patterns" value="Expressed in male germ line stem cell (sensu Vertebrata) in testis and 35 other cell types or tissues"/>
</dbReference>
<dbReference type="ExpressionAtlas" id="A6PVC2">
    <property type="expression patterns" value="baseline and differential"/>
</dbReference>
<dbReference type="GO" id="GO:0005930">
    <property type="term" value="C:axoneme"/>
    <property type="evidence" value="ECO:0000250"/>
    <property type="project" value="UniProtKB"/>
</dbReference>
<dbReference type="GO" id="GO:0005929">
    <property type="term" value="C:cilium"/>
    <property type="evidence" value="ECO:0000250"/>
    <property type="project" value="UniProtKB"/>
</dbReference>
<dbReference type="GO" id="GO:0005829">
    <property type="term" value="C:cytosol"/>
    <property type="evidence" value="ECO:0000304"/>
    <property type="project" value="Reactome"/>
</dbReference>
<dbReference type="GO" id="GO:0005874">
    <property type="term" value="C:microtubule"/>
    <property type="evidence" value="ECO:0007669"/>
    <property type="project" value="UniProtKB-KW"/>
</dbReference>
<dbReference type="GO" id="GO:0015630">
    <property type="term" value="C:microtubule cytoskeleton"/>
    <property type="evidence" value="ECO:0000250"/>
    <property type="project" value="UniProtKB"/>
</dbReference>
<dbReference type="GO" id="GO:0036126">
    <property type="term" value="C:sperm flagellum"/>
    <property type="evidence" value="ECO:0000250"/>
    <property type="project" value="UniProtKB"/>
</dbReference>
<dbReference type="GO" id="GO:0005524">
    <property type="term" value="F:ATP binding"/>
    <property type="evidence" value="ECO:0007669"/>
    <property type="project" value="UniProtKB-KW"/>
</dbReference>
<dbReference type="GO" id="GO:0046872">
    <property type="term" value="F:metal ion binding"/>
    <property type="evidence" value="ECO:0007669"/>
    <property type="project" value="UniProtKB-KW"/>
</dbReference>
<dbReference type="GO" id="GO:0070735">
    <property type="term" value="F:protein-glycine ligase activity"/>
    <property type="evidence" value="ECO:0000250"/>
    <property type="project" value="UniProtKB"/>
</dbReference>
<dbReference type="GO" id="GO:0070736">
    <property type="term" value="F:protein-glycine ligase activity, initiating"/>
    <property type="evidence" value="ECO:0000250"/>
    <property type="project" value="UniProtKB"/>
</dbReference>
<dbReference type="GO" id="GO:0035082">
    <property type="term" value="P:axoneme assembly"/>
    <property type="evidence" value="ECO:0000318"/>
    <property type="project" value="GO_Central"/>
</dbReference>
<dbReference type="GO" id="GO:0030317">
    <property type="term" value="P:flagellated sperm motility"/>
    <property type="evidence" value="ECO:0000250"/>
    <property type="project" value="UniProtKB"/>
</dbReference>
<dbReference type="GO" id="GO:0018094">
    <property type="term" value="P:protein polyglycylation"/>
    <property type="evidence" value="ECO:0000250"/>
    <property type="project" value="UniProtKB"/>
</dbReference>
<dbReference type="GO" id="GO:0007283">
    <property type="term" value="P:spermatogenesis"/>
    <property type="evidence" value="ECO:0000318"/>
    <property type="project" value="GO_Central"/>
</dbReference>
<dbReference type="FunFam" id="3.30.470.20:FF:000032">
    <property type="entry name" value="tubulin monoglycylase TTLL3 isoform X2"/>
    <property type="match status" value="1"/>
</dbReference>
<dbReference type="Gene3D" id="3.30.470.20">
    <property type="entry name" value="ATP-grasp fold, B domain"/>
    <property type="match status" value="1"/>
</dbReference>
<dbReference type="InterPro" id="IPR004344">
    <property type="entry name" value="TTL/TTLL_fam"/>
</dbReference>
<dbReference type="InterPro" id="IPR051437">
    <property type="entry name" value="TTLL_monoglycylase"/>
</dbReference>
<dbReference type="PANTHER" id="PTHR45870:SF3">
    <property type="entry name" value="PROTEIN MONOGLYCYLASE TTLL8"/>
    <property type="match status" value="1"/>
</dbReference>
<dbReference type="PANTHER" id="PTHR45870">
    <property type="entry name" value="TUBULIN MONOGLYCYLASE TTLL3"/>
    <property type="match status" value="1"/>
</dbReference>
<dbReference type="Pfam" id="PF03133">
    <property type="entry name" value="TTL"/>
    <property type="match status" value="1"/>
</dbReference>
<dbReference type="SUPFAM" id="SSF56059">
    <property type="entry name" value="Glutathione synthetase ATP-binding domain-like"/>
    <property type="match status" value="1"/>
</dbReference>
<dbReference type="PROSITE" id="PS51221">
    <property type="entry name" value="TTL"/>
    <property type="match status" value="1"/>
</dbReference>
<reference key="1">
    <citation type="journal article" date="1999" name="Nature">
        <title>The DNA sequence of human chromosome 22.</title>
        <authorList>
            <person name="Dunham I."/>
            <person name="Hunt A.R."/>
            <person name="Collins J.E."/>
            <person name="Bruskiewich R."/>
            <person name="Beare D.M."/>
            <person name="Clamp M."/>
            <person name="Smink L.J."/>
            <person name="Ainscough R."/>
            <person name="Almeida J.P."/>
            <person name="Babbage A.K."/>
            <person name="Bagguley C."/>
            <person name="Bailey J."/>
            <person name="Barlow K.F."/>
            <person name="Bates K.N."/>
            <person name="Beasley O.P."/>
            <person name="Bird C.P."/>
            <person name="Blakey S.E."/>
            <person name="Bridgeman A.M."/>
            <person name="Buck D."/>
            <person name="Burgess J."/>
            <person name="Burrill W.D."/>
            <person name="Burton J."/>
            <person name="Carder C."/>
            <person name="Carter N.P."/>
            <person name="Chen Y."/>
            <person name="Clark G."/>
            <person name="Clegg S.M."/>
            <person name="Cobley V.E."/>
            <person name="Cole C.G."/>
            <person name="Collier R.E."/>
            <person name="Connor R."/>
            <person name="Conroy D."/>
            <person name="Corby N.R."/>
            <person name="Coville G.J."/>
            <person name="Cox A.V."/>
            <person name="Davis J."/>
            <person name="Dawson E."/>
            <person name="Dhami P.D."/>
            <person name="Dockree C."/>
            <person name="Dodsworth S.J."/>
            <person name="Durbin R.M."/>
            <person name="Ellington A.G."/>
            <person name="Evans K.L."/>
            <person name="Fey J.M."/>
            <person name="Fleming K."/>
            <person name="French L."/>
            <person name="Garner A.A."/>
            <person name="Gilbert J.G.R."/>
            <person name="Goward M.E."/>
            <person name="Grafham D.V."/>
            <person name="Griffiths M.N.D."/>
            <person name="Hall C."/>
            <person name="Hall R.E."/>
            <person name="Hall-Tamlyn G."/>
            <person name="Heathcott R.W."/>
            <person name="Ho S."/>
            <person name="Holmes S."/>
            <person name="Hunt S.E."/>
            <person name="Jones M.C."/>
            <person name="Kershaw J."/>
            <person name="Kimberley A.M."/>
            <person name="King A."/>
            <person name="Laird G.K."/>
            <person name="Langford C.F."/>
            <person name="Leversha M.A."/>
            <person name="Lloyd C."/>
            <person name="Lloyd D.M."/>
            <person name="Martyn I.D."/>
            <person name="Mashreghi-Mohammadi M."/>
            <person name="Matthews L.H."/>
            <person name="Mccann O.T."/>
            <person name="Mcclay J."/>
            <person name="Mclaren S."/>
            <person name="McMurray A.A."/>
            <person name="Milne S.A."/>
            <person name="Mortimore B.J."/>
            <person name="Odell C.N."/>
            <person name="Pavitt R."/>
            <person name="Pearce A.V."/>
            <person name="Pearson D."/>
            <person name="Phillimore B.J.C.T."/>
            <person name="Phillips S.H."/>
            <person name="Plumb R.W."/>
            <person name="Ramsay H."/>
            <person name="Ramsey Y."/>
            <person name="Rogers L."/>
            <person name="Ross M.T."/>
            <person name="Scott C.E."/>
            <person name="Sehra H.K."/>
            <person name="Skuce C.D."/>
            <person name="Smalley S."/>
            <person name="Smith M.L."/>
            <person name="Soderlund C."/>
            <person name="Spragon L."/>
            <person name="Steward C.A."/>
            <person name="Sulston J.E."/>
            <person name="Swann R.M."/>
            <person name="Vaudin M."/>
            <person name="Wall M."/>
            <person name="Wallis J.M."/>
            <person name="Whiteley M.N."/>
            <person name="Willey D.L."/>
            <person name="Williams L."/>
            <person name="Williams S.A."/>
            <person name="Williamson H."/>
            <person name="Wilmer T.E."/>
            <person name="Wilming L."/>
            <person name="Wright C.L."/>
            <person name="Hubbard T."/>
            <person name="Bentley D.R."/>
            <person name="Beck S."/>
            <person name="Rogers J."/>
            <person name="Shimizu N."/>
            <person name="Minoshima S."/>
            <person name="Kawasaki K."/>
            <person name="Sasaki T."/>
            <person name="Asakawa S."/>
            <person name="Kudoh J."/>
            <person name="Shintani A."/>
            <person name="Shibuya K."/>
            <person name="Yoshizaki Y."/>
            <person name="Aoki N."/>
            <person name="Mitsuyama S."/>
            <person name="Roe B.A."/>
            <person name="Chen F."/>
            <person name="Chu L."/>
            <person name="Crabtree J."/>
            <person name="Deschamps S."/>
            <person name="Do A."/>
            <person name="Do T."/>
            <person name="Dorman A."/>
            <person name="Fang F."/>
            <person name="Fu Y."/>
            <person name="Hu P."/>
            <person name="Hua A."/>
            <person name="Kenton S."/>
            <person name="Lai H."/>
            <person name="Lao H.I."/>
            <person name="Lewis J."/>
            <person name="Lewis S."/>
            <person name="Lin S.-P."/>
            <person name="Loh P."/>
            <person name="Malaj E."/>
            <person name="Nguyen T."/>
            <person name="Pan H."/>
            <person name="Phan S."/>
            <person name="Qi S."/>
            <person name="Qian Y."/>
            <person name="Ray L."/>
            <person name="Ren Q."/>
            <person name="Shaull S."/>
            <person name="Sloan D."/>
            <person name="Song L."/>
            <person name="Wang Q."/>
            <person name="Wang Y."/>
            <person name="Wang Z."/>
            <person name="White J."/>
            <person name="Willingham D."/>
            <person name="Wu H."/>
            <person name="Yao Z."/>
            <person name="Zhan M."/>
            <person name="Zhang G."/>
            <person name="Chissoe S."/>
            <person name="Murray J."/>
            <person name="Miller N."/>
            <person name="Minx P."/>
            <person name="Fulton R."/>
            <person name="Johnson D."/>
            <person name="Bemis G."/>
            <person name="Bentley D."/>
            <person name="Bradshaw H."/>
            <person name="Bourne S."/>
            <person name="Cordes M."/>
            <person name="Du Z."/>
            <person name="Fulton L."/>
            <person name="Goela D."/>
            <person name="Graves T."/>
            <person name="Hawkins J."/>
            <person name="Hinds K."/>
            <person name="Kemp K."/>
            <person name="Latreille P."/>
            <person name="Layman D."/>
            <person name="Ozersky P."/>
            <person name="Rohlfing T."/>
            <person name="Scheet P."/>
            <person name="Walker C."/>
            <person name="Wamsley A."/>
            <person name="Wohldmann P."/>
            <person name="Pepin K."/>
            <person name="Nelson J."/>
            <person name="Korf I."/>
            <person name="Bedell J.A."/>
            <person name="Hillier L.W."/>
            <person name="Mardis E."/>
            <person name="Waterston R."/>
            <person name="Wilson R."/>
            <person name="Emanuel B.S."/>
            <person name="Shaikh T."/>
            <person name="Kurahashi H."/>
            <person name="Saitta S."/>
            <person name="Budarf M.L."/>
            <person name="McDermid H.E."/>
            <person name="Johnson A."/>
            <person name="Wong A.C.C."/>
            <person name="Morrow B.E."/>
            <person name="Edelmann L."/>
            <person name="Kim U.J."/>
            <person name="Shizuya H."/>
            <person name="Simon M.I."/>
            <person name="Dumanski J.P."/>
            <person name="Peyrard M."/>
            <person name="Kedra D."/>
            <person name="Seroussi E."/>
            <person name="Fransson I."/>
            <person name="Tapia I."/>
            <person name="Bruder C.E."/>
            <person name="O'Brien K.P."/>
            <person name="Wilkinson P."/>
            <person name="Bodenteich A."/>
            <person name="Hartman K."/>
            <person name="Hu X."/>
            <person name="Khan A.S."/>
            <person name="Lane L."/>
            <person name="Tilahun Y."/>
            <person name="Wright H."/>
        </authorList>
    </citation>
    <scope>NUCLEOTIDE SEQUENCE [LARGE SCALE GENOMIC DNA]</scope>
</reference>
<reference key="2">
    <citation type="journal article" date="2007" name="BMC Genomics">
        <title>The full-ORF clone resource of the German cDNA consortium.</title>
        <authorList>
            <person name="Bechtel S."/>
            <person name="Rosenfelder H."/>
            <person name="Duda A."/>
            <person name="Schmidt C.P."/>
            <person name="Ernst U."/>
            <person name="Wellenreuther R."/>
            <person name="Mehrle A."/>
            <person name="Schuster C."/>
            <person name="Bahr A."/>
            <person name="Bloecker H."/>
            <person name="Heubner D."/>
            <person name="Hoerlein A."/>
            <person name="Michel G."/>
            <person name="Wedler H."/>
            <person name="Koehrer K."/>
            <person name="Ottenwaelder B."/>
            <person name="Poustka A."/>
            <person name="Wiemann S."/>
            <person name="Schupp I."/>
        </authorList>
    </citation>
    <scope>NUCLEOTIDE SEQUENCE [LARGE SCALE MRNA] OF 296-551 (ISOFORM 1)</scope>
</reference>
<comment type="function">
    <text evidence="2">Monoglycylase which modifies both tubulin and non-tubulin proteins, adding a single glycine to the gamma-carboxyl groups of specific glutamate residues to generate monoglycine side chains within the C-terminal tail of target proteins. Not involved in elongation step of the polyglycylation reaction. Preferentially monoglycylates alpha-tubulin over beta-tubulin. Together with TTLL3, mediates microtubule glycylation of primary and motile cilia, which is essential for their stability and maintenance. Together with TTLL3, glycylates sperm flagella which regulates axonemal dynein motor activity, thereby controlling flagellar beat, directional sperm swimming and male fertility. Monoglycylates non-tubulin proteins such as ANP32A, ANP32B, SET, NCL and NAP1.</text>
</comment>
<comment type="catalytic activity">
    <reaction evidence="2">
        <text>L-glutamyl-[protein] + glycine + ATP = glycyl-L-glutamyl-[protein] + ADP + phosphate + H(+)</text>
        <dbReference type="Rhea" id="RHEA:67180"/>
        <dbReference type="Rhea" id="RHEA-COMP:10208"/>
        <dbReference type="Rhea" id="RHEA-COMP:17207"/>
        <dbReference type="ChEBI" id="CHEBI:15378"/>
        <dbReference type="ChEBI" id="CHEBI:29973"/>
        <dbReference type="ChEBI" id="CHEBI:30616"/>
        <dbReference type="ChEBI" id="CHEBI:43474"/>
        <dbReference type="ChEBI" id="CHEBI:57305"/>
        <dbReference type="ChEBI" id="CHEBI:167890"/>
        <dbReference type="ChEBI" id="CHEBI:456216"/>
    </reaction>
    <physiologicalReaction direction="left-to-right" evidence="2">
        <dbReference type="Rhea" id="RHEA:67181"/>
    </physiologicalReaction>
</comment>
<comment type="cofactor">
    <cofactor evidence="1">
        <name>Mg(2+)</name>
        <dbReference type="ChEBI" id="CHEBI:18420"/>
    </cofactor>
</comment>
<comment type="subcellular location">
    <subcellularLocation>
        <location evidence="2">Cytoplasm</location>
        <location evidence="2">Cytoskeleton</location>
    </subcellularLocation>
    <subcellularLocation>
        <location evidence="2">Cell projection</location>
        <location evidence="2">Cilium</location>
    </subcellularLocation>
    <subcellularLocation>
        <location evidence="2">Cytoplasm</location>
        <location evidence="2">Cytoskeleton</location>
        <location evidence="2">Cilium axoneme</location>
    </subcellularLocation>
    <subcellularLocation>
        <location evidence="2">Cytoplasm</location>
        <location evidence="2">Cytoskeleton</location>
        <location evidence="2">Flagellum axoneme</location>
    </subcellularLocation>
</comment>
<comment type="alternative products">
    <event type="alternative splicing"/>
    <isoform>
        <id>A6PVC2-1</id>
        <name>1</name>
        <sequence type="displayed"/>
    </isoform>
    <isoform>
        <id>A6PVC2-2</id>
        <name>2</name>
        <sequence type="described" ref="VSP_054007 VSP_054008 VSP_054009"/>
    </isoform>
</comment>
<comment type="domain">
    <text evidence="2">Two conserved structural elements specific among monoglycylases, IS1 and IS2, are involved in glycyl chains initiation. Two conserved structural interfaces likely constitute the binding platforms for tubulin tail and microtubule.</text>
</comment>
<comment type="domain">
    <text evidence="1">Arg-360 is the main determinant for regioselectivity, which segregates between initiases and elongases in all tubulin--tyrosine ligase family. A glutamine residue at this position is found in elongases TTLL6, TTLL9, TTLL11, TTLL13, TTLL10 and favors glutamate-chain elongation, whereas an arginine residue is found in initiases TTLL2, TTLL4, TTLL5, TTLL3, TTLL8 and favors initiation.</text>
</comment>
<comment type="caution">
    <text evidence="2">TTLL3 and TTLL8 monoglycylase-mediated glycylation of tubulin was initially reported to play a role in ependymal motile ciliary maintenance (By similarity). However, contradictory results were later observed (By similarity).</text>
</comment>
<sequence length="850" mass="94676">MEPERKGLSLASSSDGDGREENKLKQGISQDLASSSRLDRYKIARQLTEKAIKEKKIFSIYGHYPVVRAALRRKGWVEKKFHFLPKVIPDVEDEGARVNDDTCAKVKENQEMALEKTDNIHDVMSRLVKNEMPYLLWTIKRDIIDYHSLTYDQMLNHYAKTASFTTKIGLCVNMRSLPWYVPANPDSFFPRCYSLCTESEQQEFLEDFRRTMASSILKWVVSHQSCSRSSRSKPRDQREEAGSSDLSSRQDAENAEAKLRGLPGQLVDIACKVCQAYLGQLEHEDIDTSADAVEDLTEAEWEDLTQQYYSLVHGDAFISNSRNYFSQCQALLNRITSVNPQTDIDGLRNIWIIKPAAKSRGRDIVCMDRVEEILELAAADHPLSRDNKWVVQKYIETPLLICDTKFDIRQWFLVTDWNPLTIWFYKESYLRFSTQRFSLDKLDSAIHLCNNAVQKYLKNDVGRSPLLPAHNMWTSTRFQEYLQRQGRGAVWGSVIYPSMKKAIAHAMKVAQDHVEPRKNSFELYGADFVLGRDFRPWLIEINSSPTMHPSTPVTAQLCAQVQEDTIKVAVDRSCDIGNFELLWRQPVVEPPPFSGSDLCVAGVSVRRARRQVLPVCNLKASASLLDAQPLKARGPSAMPDPAQGPPSPALQRDLGLKEEKGLPLALLAPLRGAAESGGAAQPTRTKAAGKVELPACPCRHVDSQAPNTGVPVAQPAKSWDPNQLNAHPLEPVLRGLKTAEGALRPPPGGKGEGTVCSRLPHHGHHVAACQTTGTTWDGGPGVCFLRQLLASELPMGPGLPRDPRAPPCLVCRGLLPPAGPCKRCRSFCAAVLQGASFVRLGGRSCSPRTP</sequence>
<evidence type="ECO:0000250" key="1">
    <source>
        <dbReference type="UniProtKB" id="A4Q9E8"/>
    </source>
</evidence>
<evidence type="ECO:0000250" key="2">
    <source>
        <dbReference type="UniProtKB" id="A4Q9F1"/>
    </source>
</evidence>
<evidence type="ECO:0000250" key="3">
    <source>
        <dbReference type="UniProtKB" id="B2GUB3"/>
    </source>
</evidence>
<evidence type="ECO:0000255" key="4">
    <source>
        <dbReference type="PROSITE-ProRule" id="PRU00568"/>
    </source>
</evidence>
<evidence type="ECO:0000256" key="5">
    <source>
        <dbReference type="SAM" id="MobiDB-lite"/>
    </source>
</evidence>
<evidence type="ECO:0000305" key="6"/>
<evidence type="ECO:0000312" key="7">
    <source>
        <dbReference type="HGNC" id="HGNC:34000"/>
    </source>
</evidence>